<dbReference type="EMBL" id="AY653733">
    <property type="protein sequence ID" value="AAV50657.1"/>
    <property type="molecule type" value="Genomic_DNA"/>
</dbReference>
<dbReference type="SMR" id="Q5UQW5"/>
<dbReference type="KEGG" id="vg:9925010"/>
<dbReference type="OrthoDB" id="27765at10239"/>
<dbReference type="Proteomes" id="UP000001134">
    <property type="component" value="Genome"/>
</dbReference>
<dbReference type="GO" id="GO:0000175">
    <property type="term" value="F:3'-5'-RNA exonuclease activity"/>
    <property type="evidence" value="ECO:0007669"/>
    <property type="project" value="TreeGrafter"/>
</dbReference>
<dbReference type="Gene3D" id="3.60.10.10">
    <property type="entry name" value="Endonuclease/exonuclease/phosphatase"/>
    <property type="match status" value="1"/>
</dbReference>
<dbReference type="InterPro" id="IPR050410">
    <property type="entry name" value="CCR4/nocturin_mRNA_transcr"/>
</dbReference>
<dbReference type="InterPro" id="IPR036691">
    <property type="entry name" value="Endo/exonu/phosph_ase_sf"/>
</dbReference>
<dbReference type="InterPro" id="IPR005135">
    <property type="entry name" value="Endo/exonuclease/phosphatase"/>
</dbReference>
<dbReference type="PANTHER" id="PTHR12121">
    <property type="entry name" value="CARBON CATABOLITE REPRESSOR PROTEIN 4"/>
    <property type="match status" value="1"/>
</dbReference>
<dbReference type="PANTHER" id="PTHR12121:SF36">
    <property type="entry name" value="ENDONUCLEASE_EXONUCLEASE_PHOSPHATASE DOMAIN-CONTAINING PROTEIN"/>
    <property type="match status" value="1"/>
</dbReference>
<dbReference type="Pfam" id="PF03372">
    <property type="entry name" value="Exo_endo_phos"/>
    <property type="match status" value="1"/>
</dbReference>
<dbReference type="SUPFAM" id="SSF56219">
    <property type="entry name" value="DNase I-like"/>
    <property type="match status" value="1"/>
</dbReference>
<feature type="chain" id="PRO_0000248620" description="Uncharacterized protein L388">
    <location>
        <begin position="1"/>
        <end position="268"/>
    </location>
</feature>
<name>YL388_MIMIV</name>
<reference key="1">
    <citation type="journal article" date="2004" name="Science">
        <title>The 1.2-megabase genome sequence of Mimivirus.</title>
        <authorList>
            <person name="Raoult D."/>
            <person name="Audic S."/>
            <person name="Robert C."/>
            <person name="Abergel C."/>
            <person name="Renesto P."/>
            <person name="Ogata H."/>
            <person name="La Scola B."/>
            <person name="Susan M."/>
            <person name="Claverie J.-M."/>
        </authorList>
    </citation>
    <scope>NUCLEOTIDE SEQUENCE [LARGE SCALE GENOMIC DNA]</scope>
    <source>
        <strain>Rowbotham-Bradford</strain>
    </source>
</reference>
<organism>
    <name type="scientific">Acanthamoeba polyphaga mimivirus</name>
    <name type="common">APMV</name>
    <dbReference type="NCBI Taxonomy" id="212035"/>
    <lineage>
        <taxon>Viruses</taxon>
        <taxon>Varidnaviria</taxon>
        <taxon>Bamfordvirae</taxon>
        <taxon>Nucleocytoviricota</taxon>
        <taxon>Megaviricetes</taxon>
        <taxon>Imitervirales</taxon>
        <taxon>Mimiviridae</taxon>
        <taxon>Megamimivirinae</taxon>
        <taxon>Mimivirus</taxon>
        <taxon>Mimivirus bradfordmassiliense</taxon>
    </lineage>
</organism>
<gene>
    <name type="ordered locus">MIMI_L388</name>
</gene>
<sequence>MKVLNLNVFRGFHTQFHSVYKWENRRDLIINLIEAENPDIILFQECNKLQNTEDMEKFMEDLPNYDYVIKYSLPGVFRSRALIIAYNPNKLIKNSEIVKWFSDTPDVPSIGWGNPDDDFGRIILGCEFLEKNSDKKFWIFNVHFDIDVESIRKSILLLPELIDKQCLSDSKIILAGDFNTDDKLLFDTLKNNNFDRLSQTFNTTDKVKLNVSFVGKRDNFGKLTEDLYLDHVFGREVYNYNIYCPFEYDFIINKYIVSDHLPVVIIFE</sequence>
<protein>
    <recommendedName>
        <fullName>Uncharacterized protein L388</fullName>
    </recommendedName>
</protein>
<accession>Q5UQW5</accession>
<organismHost>
    <name type="scientific">Acanthamoeba polyphaga</name>
    <name type="common">Amoeba</name>
    <dbReference type="NCBI Taxonomy" id="5757"/>
</organismHost>
<keyword id="KW-1185">Reference proteome</keyword>
<proteinExistence type="predicted"/>